<keyword id="KW-0414">Isoprene biosynthesis</keyword>
<keyword id="KW-0464">Manganese</keyword>
<keyword id="KW-0479">Metal-binding</keyword>
<keyword id="KW-0521">NADP</keyword>
<keyword id="KW-0560">Oxidoreductase</keyword>
<keyword id="KW-1185">Reference proteome</keyword>
<feature type="chain" id="PRO_0000163607" description="1-deoxy-D-xylulose 5-phosphate reductoisomerase">
    <location>
        <begin position="1"/>
        <end position="379"/>
    </location>
</feature>
<feature type="binding site" evidence="1">
    <location>
        <position position="10"/>
    </location>
    <ligand>
        <name>NADPH</name>
        <dbReference type="ChEBI" id="CHEBI:57783"/>
    </ligand>
</feature>
<feature type="binding site" evidence="1">
    <location>
        <position position="11"/>
    </location>
    <ligand>
        <name>NADPH</name>
        <dbReference type="ChEBI" id="CHEBI:57783"/>
    </ligand>
</feature>
<feature type="binding site" evidence="1">
    <location>
        <position position="12"/>
    </location>
    <ligand>
        <name>NADPH</name>
        <dbReference type="ChEBI" id="CHEBI:57783"/>
    </ligand>
</feature>
<feature type="binding site" evidence="1">
    <location>
        <position position="13"/>
    </location>
    <ligand>
        <name>NADPH</name>
        <dbReference type="ChEBI" id="CHEBI:57783"/>
    </ligand>
</feature>
<feature type="binding site" evidence="1">
    <location>
        <position position="36"/>
    </location>
    <ligand>
        <name>NADPH</name>
        <dbReference type="ChEBI" id="CHEBI:57783"/>
    </ligand>
</feature>
<feature type="binding site" evidence="1">
    <location>
        <position position="38"/>
    </location>
    <ligand>
        <name>NADPH</name>
        <dbReference type="ChEBI" id="CHEBI:57783"/>
    </ligand>
</feature>
<feature type="binding site" evidence="1">
    <location>
        <position position="121"/>
    </location>
    <ligand>
        <name>NADPH</name>
        <dbReference type="ChEBI" id="CHEBI:57783"/>
    </ligand>
</feature>
<feature type="binding site" evidence="1">
    <location>
        <position position="122"/>
    </location>
    <ligand>
        <name>1-deoxy-D-xylulose 5-phosphate</name>
        <dbReference type="ChEBI" id="CHEBI:57792"/>
    </ligand>
</feature>
<feature type="binding site" evidence="1">
    <location>
        <position position="123"/>
    </location>
    <ligand>
        <name>NADPH</name>
        <dbReference type="ChEBI" id="CHEBI:57783"/>
    </ligand>
</feature>
<feature type="binding site" evidence="1">
    <location>
        <position position="147"/>
    </location>
    <ligand>
        <name>Mn(2+)</name>
        <dbReference type="ChEBI" id="CHEBI:29035"/>
    </ligand>
</feature>
<feature type="binding site" evidence="1">
    <location>
        <position position="148"/>
    </location>
    <ligand>
        <name>1-deoxy-D-xylulose 5-phosphate</name>
        <dbReference type="ChEBI" id="CHEBI:57792"/>
    </ligand>
</feature>
<feature type="binding site" evidence="1">
    <location>
        <position position="149"/>
    </location>
    <ligand>
        <name>1-deoxy-D-xylulose 5-phosphate</name>
        <dbReference type="ChEBI" id="CHEBI:57792"/>
    </ligand>
</feature>
<feature type="binding site" evidence="1">
    <location>
        <position position="149"/>
    </location>
    <ligand>
        <name>Mn(2+)</name>
        <dbReference type="ChEBI" id="CHEBI:29035"/>
    </ligand>
</feature>
<feature type="binding site" evidence="1">
    <location>
        <position position="173"/>
    </location>
    <ligand>
        <name>1-deoxy-D-xylulose 5-phosphate</name>
        <dbReference type="ChEBI" id="CHEBI:57792"/>
    </ligand>
</feature>
<feature type="binding site" evidence="1">
    <location>
        <position position="196"/>
    </location>
    <ligand>
        <name>1-deoxy-D-xylulose 5-phosphate</name>
        <dbReference type="ChEBI" id="CHEBI:57792"/>
    </ligand>
</feature>
<feature type="binding site" evidence="1">
    <location>
        <position position="202"/>
    </location>
    <ligand>
        <name>NADPH</name>
        <dbReference type="ChEBI" id="CHEBI:57783"/>
    </ligand>
</feature>
<feature type="binding site" evidence="1">
    <location>
        <position position="209"/>
    </location>
    <ligand>
        <name>1-deoxy-D-xylulose 5-phosphate</name>
        <dbReference type="ChEBI" id="CHEBI:57792"/>
    </ligand>
</feature>
<feature type="binding site" evidence="1">
    <location>
        <position position="214"/>
    </location>
    <ligand>
        <name>1-deoxy-D-xylulose 5-phosphate</name>
        <dbReference type="ChEBI" id="CHEBI:57792"/>
    </ligand>
</feature>
<feature type="binding site" evidence="1">
    <location>
        <position position="215"/>
    </location>
    <ligand>
        <name>1-deoxy-D-xylulose 5-phosphate</name>
        <dbReference type="ChEBI" id="CHEBI:57792"/>
    </ligand>
</feature>
<feature type="binding site" evidence="1">
    <location>
        <position position="218"/>
    </location>
    <ligand>
        <name>1-deoxy-D-xylulose 5-phosphate</name>
        <dbReference type="ChEBI" id="CHEBI:57792"/>
    </ligand>
</feature>
<feature type="binding site" evidence="1">
    <location>
        <position position="218"/>
    </location>
    <ligand>
        <name>Mn(2+)</name>
        <dbReference type="ChEBI" id="CHEBI:29035"/>
    </ligand>
</feature>
<reference key="1">
    <citation type="submission" date="2003-10" db="EMBL/GenBank/DDBJ databases">
        <title>The complete genome sequence of the alkaliphilic Bacillus clausii KSM-K16.</title>
        <authorList>
            <person name="Takaki Y."/>
            <person name="Kageyama Y."/>
            <person name="Shimamura S."/>
            <person name="Suzuki H."/>
            <person name="Nishi S."/>
            <person name="Hatada Y."/>
            <person name="Kawai S."/>
            <person name="Ito S."/>
            <person name="Horikoshi K."/>
        </authorList>
    </citation>
    <scope>NUCLEOTIDE SEQUENCE [LARGE SCALE GENOMIC DNA]</scope>
    <source>
        <strain>KSM-K16</strain>
    </source>
</reference>
<organism>
    <name type="scientific">Shouchella clausii (strain KSM-K16)</name>
    <name type="common">Alkalihalobacillus clausii</name>
    <dbReference type="NCBI Taxonomy" id="66692"/>
    <lineage>
        <taxon>Bacteria</taxon>
        <taxon>Bacillati</taxon>
        <taxon>Bacillota</taxon>
        <taxon>Bacilli</taxon>
        <taxon>Bacillales</taxon>
        <taxon>Bacillaceae</taxon>
        <taxon>Shouchella</taxon>
    </lineage>
</organism>
<sequence length="379" mass="41581">MKQISLLGSTGSIGTQTLDVIRDYPDQFTLSALACGTNLELCRNQIKEFQPKLVSVQRPEDAQTLAGEFGDSIEFLYGEEGLKEVARYSESDIVVTAITGSIGLLPTLSAIKAKKAVAIANKETLVSAGHLVVSAAKENDVPLIPVDSEHSAIFQALNGEPKKAVDRLILTASGGSFRDKSRAELDGVTVEQALAHPNWSMGAKVTIDSATMMNKGLEVIEAKWLFGLDYDQIDVLIHKESIIHSMVEYVDRSVIAQLGTPDMRVPIQYALTYPERFARPKHERLDLAELGKLHFEKMDMERFRCMKLAYEAGRAGGTMTTVLNAANEVAVCRFLQGEITFLEIERIIEEALSAHSPIAHPSLEEIQAVDASIRKQLQA</sequence>
<accession>Q5WFT4</accession>
<proteinExistence type="inferred from homology"/>
<evidence type="ECO:0000255" key="1">
    <source>
        <dbReference type="HAMAP-Rule" id="MF_00183"/>
    </source>
</evidence>
<dbReference type="EC" id="1.1.1.267" evidence="1"/>
<dbReference type="EMBL" id="AP006627">
    <property type="protein sequence ID" value="BAD64771.1"/>
    <property type="molecule type" value="Genomic_DNA"/>
</dbReference>
<dbReference type="RefSeq" id="WP_011247079.1">
    <property type="nucleotide sequence ID" value="NC_006582.1"/>
</dbReference>
<dbReference type="SMR" id="Q5WFT4"/>
<dbReference type="STRING" id="66692.ABC2236"/>
<dbReference type="KEGG" id="bcl:ABC2236"/>
<dbReference type="eggNOG" id="COG0743">
    <property type="taxonomic scope" value="Bacteria"/>
</dbReference>
<dbReference type="HOGENOM" id="CLU_035714_4_0_9"/>
<dbReference type="OrthoDB" id="9806546at2"/>
<dbReference type="UniPathway" id="UPA00056">
    <property type="reaction ID" value="UER00092"/>
</dbReference>
<dbReference type="Proteomes" id="UP000001168">
    <property type="component" value="Chromosome"/>
</dbReference>
<dbReference type="GO" id="GO:0030604">
    <property type="term" value="F:1-deoxy-D-xylulose-5-phosphate reductoisomerase activity"/>
    <property type="evidence" value="ECO:0007669"/>
    <property type="project" value="UniProtKB-UniRule"/>
</dbReference>
<dbReference type="GO" id="GO:0030145">
    <property type="term" value="F:manganese ion binding"/>
    <property type="evidence" value="ECO:0007669"/>
    <property type="project" value="TreeGrafter"/>
</dbReference>
<dbReference type="GO" id="GO:0070402">
    <property type="term" value="F:NADPH binding"/>
    <property type="evidence" value="ECO:0007669"/>
    <property type="project" value="InterPro"/>
</dbReference>
<dbReference type="GO" id="GO:0051484">
    <property type="term" value="P:isopentenyl diphosphate biosynthetic process, methylerythritol 4-phosphate pathway involved in terpenoid biosynthetic process"/>
    <property type="evidence" value="ECO:0007669"/>
    <property type="project" value="TreeGrafter"/>
</dbReference>
<dbReference type="FunFam" id="3.40.50.720:FF:000045">
    <property type="entry name" value="1-deoxy-D-xylulose 5-phosphate reductoisomerase"/>
    <property type="match status" value="1"/>
</dbReference>
<dbReference type="Gene3D" id="1.10.1740.10">
    <property type="match status" value="1"/>
</dbReference>
<dbReference type="Gene3D" id="3.40.50.720">
    <property type="entry name" value="NAD(P)-binding Rossmann-like Domain"/>
    <property type="match status" value="1"/>
</dbReference>
<dbReference type="HAMAP" id="MF_00183">
    <property type="entry name" value="DXP_reductoisom"/>
    <property type="match status" value="1"/>
</dbReference>
<dbReference type="InterPro" id="IPR003821">
    <property type="entry name" value="DXP_reductoisomerase"/>
</dbReference>
<dbReference type="InterPro" id="IPR013644">
    <property type="entry name" value="DXP_reductoisomerase_C"/>
</dbReference>
<dbReference type="InterPro" id="IPR013512">
    <property type="entry name" value="DXP_reductoisomerase_N"/>
</dbReference>
<dbReference type="InterPro" id="IPR026877">
    <property type="entry name" value="DXPR_C"/>
</dbReference>
<dbReference type="InterPro" id="IPR036169">
    <property type="entry name" value="DXPR_C_sf"/>
</dbReference>
<dbReference type="InterPro" id="IPR036291">
    <property type="entry name" value="NAD(P)-bd_dom_sf"/>
</dbReference>
<dbReference type="NCBIfam" id="TIGR00243">
    <property type="entry name" value="Dxr"/>
    <property type="match status" value="1"/>
</dbReference>
<dbReference type="NCBIfam" id="NF009114">
    <property type="entry name" value="PRK12464.1"/>
    <property type="match status" value="1"/>
</dbReference>
<dbReference type="PANTHER" id="PTHR30525">
    <property type="entry name" value="1-DEOXY-D-XYLULOSE 5-PHOSPHATE REDUCTOISOMERASE"/>
    <property type="match status" value="1"/>
</dbReference>
<dbReference type="PANTHER" id="PTHR30525:SF0">
    <property type="entry name" value="1-DEOXY-D-XYLULOSE 5-PHOSPHATE REDUCTOISOMERASE, CHLOROPLASTIC"/>
    <property type="match status" value="1"/>
</dbReference>
<dbReference type="Pfam" id="PF08436">
    <property type="entry name" value="DXP_redisom_C"/>
    <property type="match status" value="1"/>
</dbReference>
<dbReference type="Pfam" id="PF02670">
    <property type="entry name" value="DXP_reductoisom"/>
    <property type="match status" value="1"/>
</dbReference>
<dbReference type="Pfam" id="PF13288">
    <property type="entry name" value="DXPR_C"/>
    <property type="match status" value="1"/>
</dbReference>
<dbReference type="PIRSF" id="PIRSF006205">
    <property type="entry name" value="Dxp_reductismrs"/>
    <property type="match status" value="1"/>
</dbReference>
<dbReference type="SUPFAM" id="SSF69055">
    <property type="entry name" value="1-deoxy-D-xylulose-5-phosphate reductoisomerase, C-terminal domain"/>
    <property type="match status" value="1"/>
</dbReference>
<dbReference type="SUPFAM" id="SSF55347">
    <property type="entry name" value="Glyceraldehyde-3-phosphate dehydrogenase-like, C-terminal domain"/>
    <property type="match status" value="1"/>
</dbReference>
<dbReference type="SUPFAM" id="SSF51735">
    <property type="entry name" value="NAD(P)-binding Rossmann-fold domains"/>
    <property type="match status" value="1"/>
</dbReference>
<gene>
    <name evidence="1" type="primary">dxr</name>
    <name type="ordered locus">ABC2236</name>
</gene>
<comment type="function">
    <text evidence="1">Catalyzes the NADPH-dependent rearrangement and reduction of 1-deoxy-D-xylulose-5-phosphate (DXP) to 2-C-methyl-D-erythritol 4-phosphate (MEP).</text>
</comment>
<comment type="catalytic activity">
    <reaction evidence="1">
        <text>2-C-methyl-D-erythritol 4-phosphate + NADP(+) = 1-deoxy-D-xylulose 5-phosphate + NADPH + H(+)</text>
        <dbReference type="Rhea" id="RHEA:13717"/>
        <dbReference type="ChEBI" id="CHEBI:15378"/>
        <dbReference type="ChEBI" id="CHEBI:57783"/>
        <dbReference type="ChEBI" id="CHEBI:57792"/>
        <dbReference type="ChEBI" id="CHEBI:58262"/>
        <dbReference type="ChEBI" id="CHEBI:58349"/>
        <dbReference type="EC" id="1.1.1.267"/>
    </reaction>
    <physiologicalReaction direction="right-to-left" evidence="1">
        <dbReference type="Rhea" id="RHEA:13719"/>
    </physiologicalReaction>
</comment>
<comment type="cofactor">
    <cofactor evidence="1">
        <name>Mg(2+)</name>
        <dbReference type="ChEBI" id="CHEBI:18420"/>
    </cofactor>
    <cofactor evidence="1">
        <name>Mn(2+)</name>
        <dbReference type="ChEBI" id="CHEBI:29035"/>
    </cofactor>
</comment>
<comment type="pathway">
    <text evidence="1">Isoprenoid biosynthesis; isopentenyl diphosphate biosynthesis via DXP pathway; isopentenyl diphosphate from 1-deoxy-D-xylulose 5-phosphate: step 1/6.</text>
</comment>
<comment type="similarity">
    <text evidence="1">Belongs to the DXR family.</text>
</comment>
<protein>
    <recommendedName>
        <fullName evidence="1">1-deoxy-D-xylulose 5-phosphate reductoisomerase</fullName>
        <shortName evidence="1">DXP reductoisomerase</shortName>
        <ecNumber evidence="1">1.1.1.267</ecNumber>
    </recommendedName>
    <alternativeName>
        <fullName evidence="1">1-deoxyxylulose-5-phosphate reductoisomerase</fullName>
    </alternativeName>
    <alternativeName>
        <fullName evidence="1">2-C-methyl-D-erythritol 4-phosphate synthase</fullName>
    </alternativeName>
</protein>
<name>DXR_SHOC1</name>